<reference key="1">
    <citation type="submission" date="2008-01" db="EMBL/GenBank/DDBJ databases">
        <title>Complete sequence of Shewanella halifaxensis HAW-EB4.</title>
        <authorList>
            <consortium name="US DOE Joint Genome Institute"/>
            <person name="Copeland A."/>
            <person name="Lucas S."/>
            <person name="Lapidus A."/>
            <person name="Glavina del Rio T."/>
            <person name="Dalin E."/>
            <person name="Tice H."/>
            <person name="Bruce D."/>
            <person name="Goodwin L."/>
            <person name="Pitluck S."/>
            <person name="Sims D."/>
            <person name="Brettin T."/>
            <person name="Detter J.C."/>
            <person name="Han C."/>
            <person name="Kuske C.R."/>
            <person name="Schmutz J."/>
            <person name="Larimer F."/>
            <person name="Land M."/>
            <person name="Hauser L."/>
            <person name="Kyrpides N."/>
            <person name="Kim E."/>
            <person name="Zhao J.-S."/>
            <person name="Richardson P."/>
        </authorList>
    </citation>
    <scope>NUCLEOTIDE SEQUENCE [LARGE SCALE GENOMIC DNA]</scope>
    <source>
        <strain>HAW-EB4</strain>
    </source>
</reference>
<feature type="chain" id="PRO_1000082342" description="UDP-2,3-diacylglucosamine hydrolase">
    <location>
        <begin position="1"/>
        <end position="238"/>
    </location>
</feature>
<feature type="binding site" evidence="1">
    <location>
        <position position="8"/>
    </location>
    <ligand>
        <name>Mn(2+)</name>
        <dbReference type="ChEBI" id="CHEBI:29035"/>
        <label>1</label>
    </ligand>
</feature>
<feature type="binding site" evidence="1">
    <location>
        <position position="10"/>
    </location>
    <ligand>
        <name>Mn(2+)</name>
        <dbReference type="ChEBI" id="CHEBI:29035"/>
        <label>1</label>
    </ligand>
</feature>
<feature type="binding site" evidence="1">
    <location>
        <position position="41"/>
    </location>
    <ligand>
        <name>Mn(2+)</name>
        <dbReference type="ChEBI" id="CHEBI:29035"/>
        <label>1</label>
    </ligand>
</feature>
<feature type="binding site" evidence="1">
    <location>
        <position position="41"/>
    </location>
    <ligand>
        <name>Mn(2+)</name>
        <dbReference type="ChEBI" id="CHEBI:29035"/>
        <label>2</label>
    </ligand>
</feature>
<feature type="binding site" evidence="1">
    <location>
        <begin position="78"/>
        <end position="79"/>
    </location>
    <ligand>
        <name>substrate</name>
    </ligand>
</feature>
<feature type="binding site" evidence="1">
    <location>
        <position position="78"/>
    </location>
    <ligand>
        <name>Mn(2+)</name>
        <dbReference type="ChEBI" id="CHEBI:29035"/>
        <label>2</label>
    </ligand>
</feature>
<feature type="binding site" evidence="1">
    <location>
        <position position="113"/>
    </location>
    <ligand>
        <name>Mn(2+)</name>
        <dbReference type="ChEBI" id="CHEBI:29035"/>
        <label>2</label>
    </ligand>
</feature>
<feature type="binding site" evidence="1">
    <location>
        <position position="121"/>
    </location>
    <ligand>
        <name>substrate</name>
    </ligand>
</feature>
<feature type="binding site" evidence="1">
    <location>
        <position position="159"/>
    </location>
    <ligand>
        <name>substrate</name>
    </ligand>
</feature>
<feature type="binding site" evidence="1">
    <location>
        <position position="163"/>
    </location>
    <ligand>
        <name>substrate</name>
    </ligand>
</feature>
<feature type="binding site" evidence="1">
    <location>
        <position position="166"/>
    </location>
    <ligand>
        <name>substrate</name>
    </ligand>
</feature>
<feature type="binding site" evidence="1">
    <location>
        <position position="194"/>
    </location>
    <ligand>
        <name>Mn(2+)</name>
        <dbReference type="ChEBI" id="CHEBI:29035"/>
        <label>2</label>
    </ligand>
</feature>
<feature type="binding site" evidence="1">
    <location>
        <position position="194"/>
    </location>
    <ligand>
        <name>substrate</name>
    </ligand>
</feature>
<feature type="binding site" evidence="1">
    <location>
        <position position="196"/>
    </location>
    <ligand>
        <name>Mn(2+)</name>
        <dbReference type="ChEBI" id="CHEBI:29035"/>
        <label>1</label>
    </ligand>
</feature>
<proteinExistence type="inferred from homology"/>
<sequence>MRTLFVGDLHLSTDRPDITQAFLRFLDTQLHDTDALYILGDLFEVWVGDDIAEPFAEQLAKAIYQASQKLPIFFIHGNRDFLISNAFAKRSGMTLLPEIYTVDLYGIPTVILHGDSLCTLDKPYQRFRKFRNLGWAKWLYAHLPKSKRLDIAVKLRSKSQSSNQQKSYSIMDVEPDAVLELLNATKTEQMIHGHTHRPAIHQLANGRRRIVVGDWYEQGSMLSVSQDKIELIELPFGK</sequence>
<organism>
    <name type="scientific">Shewanella halifaxensis (strain HAW-EB4)</name>
    <dbReference type="NCBI Taxonomy" id="458817"/>
    <lineage>
        <taxon>Bacteria</taxon>
        <taxon>Pseudomonadati</taxon>
        <taxon>Pseudomonadota</taxon>
        <taxon>Gammaproteobacteria</taxon>
        <taxon>Alteromonadales</taxon>
        <taxon>Shewanellaceae</taxon>
        <taxon>Shewanella</taxon>
    </lineage>
</organism>
<comment type="function">
    <text evidence="1">Hydrolyzes the pyrophosphate bond of UDP-2,3-diacylglucosamine to yield 2,3-diacylglucosamine 1-phosphate (lipid X) and UMP by catalyzing the attack of water at the alpha-P atom. Involved in the biosynthesis of lipid A, a phosphorylated glycolipid that anchors the lipopolysaccharide to the outer membrane of the cell.</text>
</comment>
<comment type="catalytic activity">
    <reaction evidence="1">
        <text>UDP-2-N,3-O-bis[(3R)-3-hydroxytetradecanoyl]-alpha-D-glucosamine + H2O = 2-N,3-O-bis[(3R)-3-hydroxytetradecanoyl]-alpha-D-glucosaminyl 1-phosphate + UMP + 2 H(+)</text>
        <dbReference type="Rhea" id="RHEA:25213"/>
        <dbReference type="ChEBI" id="CHEBI:15377"/>
        <dbReference type="ChEBI" id="CHEBI:15378"/>
        <dbReference type="ChEBI" id="CHEBI:57865"/>
        <dbReference type="ChEBI" id="CHEBI:57957"/>
        <dbReference type="ChEBI" id="CHEBI:78847"/>
        <dbReference type="EC" id="3.6.1.54"/>
    </reaction>
</comment>
<comment type="cofactor">
    <cofactor evidence="1">
        <name>Mn(2+)</name>
        <dbReference type="ChEBI" id="CHEBI:29035"/>
    </cofactor>
    <text evidence="1">Binds 2 Mn(2+) ions per subunit in a binuclear metal center.</text>
</comment>
<comment type="pathway">
    <text evidence="1">Glycolipid biosynthesis; lipid IV(A) biosynthesis; lipid IV(A) from (3R)-3-hydroxytetradecanoyl-[acyl-carrier-protein] and UDP-N-acetyl-alpha-D-glucosamine: step 4/6.</text>
</comment>
<comment type="subcellular location">
    <subcellularLocation>
        <location evidence="1">Cell inner membrane</location>
        <topology evidence="1">Peripheral membrane protein</topology>
        <orientation evidence="1">Cytoplasmic side</orientation>
    </subcellularLocation>
</comment>
<comment type="similarity">
    <text evidence="1">Belongs to the LpxH family.</text>
</comment>
<dbReference type="EC" id="3.6.1.54" evidence="1"/>
<dbReference type="EMBL" id="CP000931">
    <property type="protein sequence ID" value="ABZ77326.1"/>
    <property type="molecule type" value="Genomic_DNA"/>
</dbReference>
<dbReference type="RefSeq" id="WP_012277854.1">
    <property type="nucleotide sequence ID" value="NC_010334.1"/>
</dbReference>
<dbReference type="SMR" id="B0TLV4"/>
<dbReference type="STRING" id="458817.Shal_2773"/>
<dbReference type="KEGG" id="shl:Shal_2773"/>
<dbReference type="eggNOG" id="COG2908">
    <property type="taxonomic scope" value="Bacteria"/>
</dbReference>
<dbReference type="HOGENOM" id="CLU_074586_0_0_6"/>
<dbReference type="OrthoDB" id="9783283at2"/>
<dbReference type="UniPathway" id="UPA00359">
    <property type="reaction ID" value="UER00480"/>
</dbReference>
<dbReference type="Proteomes" id="UP000001317">
    <property type="component" value="Chromosome"/>
</dbReference>
<dbReference type="GO" id="GO:0005737">
    <property type="term" value="C:cytoplasm"/>
    <property type="evidence" value="ECO:0007669"/>
    <property type="project" value="InterPro"/>
</dbReference>
<dbReference type="GO" id="GO:0019897">
    <property type="term" value="C:extrinsic component of plasma membrane"/>
    <property type="evidence" value="ECO:0007669"/>
    <property type="project" value="UniProtKB-UniRule"/>
</dbReference>
<dbReference type="GO" id="GO:0030145">
    <property type="term" value="F:manganese ion binding"/>
    <property type="evidence" value="ECO:0007669"/>
    <property type="project" value="UniProtKB-UniRule"/>
</dbReference>
<dbReference type="GO" id="GO:0008758">
    <property type="term" value="F:UDP-2,3-diacylglucosamine hydrolase activity"/>
    <property type="evidence" value="ECO:0007669"/>
    <property type="project" value="UniProtKB-UniRule"/>
</dbReference>
<dbReference type="GO" id="GO:0009245">
    <property type="term" value="P:lipid A biosynthetic process"/>
    <property type="evidence" value="ECO:0007669"/>
    <property type="project" value="UniProtKB-UniRule"/>
</dbReference>
<dbReference type="CDD" id="cd07398">
    <property type="entry name" value="MPP_YbbF-LpxH"/>
    <property type="match status" value="1"/>
</dbReference>
<dbReference type="Gene3D" id="3.60.21.10">
    <property type="match status" value="1"/>
</dbReference>
<dbReference type="HAMAP" id="MF_00575">
    <property type="entry name" value="LpxH"/>
    <property type="match status" value="1"/>
</dbReference>
<dbReference type="InterPro" id="IPR004843">
    <property type="entry name" value="Calcineurin-like_PHP_ApaH"/>
</dbReference>
<dbReference type="InterPro" id="IPR043461">
    <property type="entry name" value="LpxH-like"/>
</dbReference>
<dbReference type="InterPro" id="IPR029052">
    <property type="entry name" value="Metallo-depent_PP-like"/>
</dbReference>
<dbReference type="InterPro" id="IPR010138">
    <property type="entry name" value="UDP-diacylglucosamine_Hdrlase"/>
</dbReference>
<dbReference type="NCBIfam" id="TIGR01854">
    <property type="entry name" value="lipid_A_lpxH"/>
    <property type="match status" value="1"/>
</dbReference>
<dbReference type="NCBIfam" id="NF003743">
    <property type="entry name" value="PRK05340.1"/>
    <property type="match status" value="1"/>
</dbReference>
<dbReference type="PANTHER" id="PTHR34990:SF1">
    <property type="entry name" value="UDP-2,3-DIACYLGLUCOSAMINE HYDROLASE"/>
    <property type="match status" value="1"/>
</dbReference>
<dbReference type="PANTHER" id="PTHR34990">
    <property type="entry name" value="UDP-2,3-DIACYLGLUCOSAMINE HYDROLASE-RELATED"/>
    <property type="match status" value="1"/>
</dbReference>
<dbReference type="Pfam" id="PF00149">
    <property type="entry name" value="Metallophos"/>
    <property type="match status" value="1"/>
</dbReference>
<dbReference type="SUPFAM" id="SSF56300">
    <property type="entry name" value="Metallo-dependent phosphatases"/>
    <property type="match status" value="1"/>
</dbReference>
<gene>
    <name evidence="1" type="primary">lpxH</name>
    <name type="ordered locus">Shal_2773</name>
</gene>
<keyword id="KW-0997">Cell inner membrane</keyword>
<keyword id="KW-1003">Cell membrane</keyword>
<keyword id="KW-0378">Hydrolase</keyword>
<keyword id="KW-0441">Lipid A biosynthesis</keyword>
<keyword id="KW-0444">Lipid biosynthesis</keyword>
<keyword id="KW-0443">Lipid metabolism</keyword>
<keyword id="KW-0464">Manganese</keyword>
<keyword id="KW-0472">Membrane</keyword>
<keyword id="KW-0479">Metal-binding</keyword>
<protein>
    <recommendedName>
        <fullName evidence="1">UDP-2,3-diacylglucosamine hydrolase</fullName>
        <ecNumber evidence="1">3.6.1.54</ecNumber>
    </recommendedName>
    <alternativeName>
        <fullName evidence="1">UDP-2,3-diacylglucosamine diphosphatase</fullName>
    </alternativeName>
</protein>
<name>LPXH_SHEHH</name>
<accession>B0TLV4</accession>
<evidence type="ECO:0000255" key="1">
    <source>
        <dbReference type="HAMAP-Rule" id="MF_00575"/>
    </source>
</evidence>